<dbReference type="EMBL" id="CP000918">
    <property type="protein sequence ID" value="ACO16276.1"/>
    <property type="molecule type" value="Genomic_DNA"/>
</dbReference>
<dbReference type="RefSeq" id="WP_000160197.1">
    <property type="nucleotide sequence ID" value="NC_012468.1"/>
</dbReference>
<dbReference type="SMR" id="C1CAL2"/>
<dbReference type="GeneID" id="93738957"/>
<dbReference type="KEGG" id="snm:SP70585_0265"/>
<dbReference type="HOGENOM" id="CLU_044142_4_1_9"/>
<dbReference type="Proteomes" id="UP000002211">
    <property type="component" value="Chromosome"/>
</dbReference>
<dbReference type="GO" id="GO:0022625">
    <property type="term" value="C:cytosolic large ribosomal subunit"/>
    <property type="evidence" value="ECO:0007669"/>
    <property type="project" value="TreeGrafter"/>
</dbReference>
<dbReference type="GO" id="GO:0019843">
    <property type="term" value="F:rRNA binding"/>
    <property type="evidence" value="ECO:0007669"/>
    <property type="project" value="UniProtKB-UniRule"/>
</dbReference>
<dbReference type="GO" id="GO:0003735">
    <property type="term" value="F:structural constituent of ribosome"/>
    <property type="evidence" value="ECO:0007669"/>
    <property type="project" value="InterPro"/>
</dbReference>
<dbReference type="GO" id="GO:0006412">
    <property type="term" value="P:translation"/>
    <property type="evidence" value="ECO:0007669"/>
    <property type="project" value="UniProtKB-UniRule"/>
</dbReference>
<dbReference type="FunFam" id="2.40.30.10:FF:000004">
    <property type="entry name" value="50S ribosomal protein L3"/>
    <property type="match status" value="1"/>
</dbReference>
<dbReference type="FunFam" id="3.30.160.810:FF:000002">
    <property type="entry name" value="50S ribosomal protein L3"/>
    <property type="match status" value="1"/>
</dbReference>
<dbReference type="Gene3D" id="3.30.160.810">
    <property type="match status" value="1"/>
</dbReference>
<dbReference type="Gene3D" id="2.40.30.10">
    <property type="entry name" value="Translation factors"/>
    <property type="match status" value="1"/>
</dbReference>
<dbReference type="HAMAP" id="MF_01325_B">
    <property type="entry name" value="Ribosomal_uL3_B"/>
    <property type="match status" value="1"/>
</dbReference>
<dbReference type="InterPro" id="IPR000597">
    <property type="entry name" value="Ribosomal_uL3"/>
</dbReference>
<dbReference type="InterPro" id="IPR019927">
    <property type="entry name" value="Ribosomal_uL3_bac/org-type"/>
</dbReference>
<dbReference type="InterPro" id="IPR019926">
    <property type="entry name" value="Ribosomal_uL3_CS"/>
</dbReference>
<dbReference type="InterPro" id="IPR009000">
    <property type="entry name" value="Transl_B-barrel_sf"/>
</dbReference>
<dbReference type="NCBIfam" id="TIGR03625">
    <property type="entry name" value="L3_bact"/>
    <property type="match status" value="1"/>
</dbReference>
<dbReference type="PANTHER" id="PTHR11229">
    <property type="entry name" value="50S RIBOSOMAL PROTEIN L3"/>
    <property type="match status" value="1"/>
</dbReference>
<dbReference type="PANTHER" id="PTHR11229:SF16">
    <property type="entry name" value="LARGE RIBOSOMAL SUBUNIT PROTEIN UL3C"/>
    <property type="match status" value="1"/>
</dbReference>
<dbReference type="Pfam" id="PF00297">
    <property type="entry name" value="Ribosomal_L3"/>
    <property type="match status" value="1"/>
</dbReference>
<dbReference type="SUPFAM" id="SSF50447">
    <property type="entry name" value="Translation proteins"/>
    <property type="match status" value="1"/>
</dbReference>
<dbReference type="PROSITE" id="PS00474">
    <property type="entry name" value="RIBOSOMAL_L3"/>
    <property type="match status" value="1"/>
</dbReference>
<name>RL3_STRP7</name>
<reference key="1">
    <citation type="journal article" date="2010" name="Genome Biol.">
        <title>Structure and dynamics of the pan-genome of Streptococcus pneumoniae and closely related species.</title>
        <authorList>
            <person name="Donati C."/>
            <person name="Hiller N.L."/>
            <person name="Tettelin H."/>
            <person name="Muzzi A."/>
            <person name="Croucher N.J."/>
            <person name="Angiuoli S.V."/>
            <person name="Oggioni M."/>
            <person name="Dunning Hotopp J.C."/>
            <person name="Hu F.Z."/>
            <person name="Riley D.R."/>
            <person name="Covacci A."/>
            <person name="Mitchell T.J."/>
            <person name="Bentley S.D."/>
            <person name="Kilian M."/>
            <person name="Ehrlich G.D."/>
            <person name="Rappuoli R."/>
            <person name="Moxon E.R."/>
            <person name="Masignani V."/>
        </authorList>
    </citation>
    <scope>NUCLEOTIDE SEQUENCE [LARGE SCALE GENOMIC DNA]</scope>
    <source>
        <strain>70585</strain>
    </source>
</reference>
<evidence type="ECO:0000255" key="1">
    <source>
        <dbReference type="HAMAP-Rule" id="MF_01325"/>
    </source>
</evidence>
<evidence type="ECO:0000256" key="2">
    <source>
        <dbReference type="SAM" id="MobiDB-lite"/>
    </source>
</evidence>
<evidence type="ECO:0000305" key="3"/>
<sequence length="208" mass="22178">MTKGILGKKVGMTQIFTEAGELIPVTVIEATPNVVLQVKTVETDGYNAIQVGFDDKREVLSNKPAKGHVAKANTAPKRFIREFKNVEGLEVGAEITVETFAAGDVVDVTGTSKGKGFQGVIKRHGQSRGPMAHGSRYHRRPGSMGPVAPNRVFKGKNLAGRMGGDRVTIQNLEVVQVVPEKNVILIKGNVPGAKKSLITIKSAVKAGK</sequence>
<feature type="chain" id="PRO_1000165906" description="Large ribosomal subunit protein uL3">
    <location>
        <begin position="1"/>
        <end position="208"/>
    </location>
</feature>
<feature type="region of interest" description="Disordered" evidence="2">
    <location>
        <begin position="116"/>
        <end position="148"/>
    </location>
</feature>
<keyword id="KW-0687">Ribonucleoprotein</keyword>
<keyword id="KW-0689">Ribosomal protein</keyword>
<keyword id="KW-0694">RNA-binding</keyword>
<keyword id="KW-0699">rRNA-binding</keyword>
<accession>C1CAL2</accession>
<proteinExistence type="inferred from homology"/>
<comment type="function">
    <text evidence="1">One of the primary rRNA binding proteins, it binds directly near the 3'-end of the 23S rRNA, where it nucleates assembly of the 50S subunit.</text>
</comment>
<comment type="subunit">
    <text evidence="1">Part of the 50S ribosomal subunit. Forms a cluster with proteins L14 and L19.</text>
</comment>
<comment type="similarity">
    <text evidence="1">Belongs to the universal ribosomal protein uL3 family.</text>
</comment>
<organism>
    <name type="scientific">Streptococcus pneumoniae (strain 70585)</name>
    <dbReference type="NCBI Taxonomy" id="488221"/>
    <lineage>
        <taxon>Bacteria</taxon>
        <taxon>Bacillati</taxon>
        <taxon>Bacillota</taxon>
        <taxon>Bacilli</taxon>
        <taxon>Lactobacillales</taxon>
        <taxon>Streptococcaceae</taxon>
        <taxon>Streptococcus</taxon>
    </lineage>
</organism>
<protein>
    <recommendedName>
        <fullName evidence="1">Large ribosomal subunit protein uL3</fullName>
    </recommendedName>
    <alternativeName>
        <fullName evidence="3">50S ribosomal protein L3</fullName>
    </alternativeName>
</protein>
<gene>
    <name evidence="1" type="primary">rplC</name>
    <name type="ordered locus">SP70585_0265</name>
</gene>